<reference key="1">
    <citation type="journal article" date="2003" name="Biochim. Biophys. Acta">
        <title>Complete DNA sequence of the atp operon of the sodium-dependent F1Fo ATP synthase from Ilyobacter tartaricus and identification of the encoded subunits.</title>
        <authorList>
            <person name="Meier T."/>
            <person name="von Ballmoos C."/>
            <person name="Neumann S."/>
            <person name="Kaim G."/>
        </authorList>
    </citation>
    <scope>NUCLEOTIDE SEQUENCE [GENOMIC DNA]</scope>
    <scope>PROTEIN SEQUENCE OF 1-29</scope>
    <source>
        <strain>ATCC 35898 / DSM 2382 / GraTa2</strain>
    </source>
</reference>
<organism>
    <name type="scientific">Ilyobacter tartaricus</name>
    <dbReference type="NCBI Taxonomy" id="167644"/>
    <lineage>
        <taxon>Bacteria</taxon>
        <taxon>Fusobacteriati</taxon>
        <taxon>Fusobacteriota</taxon>
        <taxon>Fusobacteriia</taxon>
        <taxon>Fusobacteriales</taxon>
        <taxon>Fusobacteriaceae</taxon>
        <taxon>Ilyobacter</taxon>
    </lineage>
</organism>
<keyword id="KW-0066">ATP synthesis</keyword>
<keyword id="KW-0997">Cell inner membrane</keyword>
<keyword id="KW-1003">Cell membrane</keyword>
<keyword id="KW-0138">CF(0)</keyword>
<keyword id="KW-0903">Direct protein sequencing</keyword>
<keyword id="KW-0375">Hydrogen ion transport</keyword>
<keyword id="KW-0406">Ion transport</keyword>
<keyword id="KW-0472">Membrane</keyword>
<keyword id="KW-0915">Sodium</keyword>
<keyword id="KW-0739">Sodium transport</keyword>
<keyword id="KW-0812">Transmembrane</keyword>
<keyword id="KW-1133">Transmembrane helix</keyword>
<keyword id="KW-0813">Transport</keyword>
<name>ATPF_ILYTA</name>
<sequence>MAPQNMPAVSIDINMFWQIINFLILMFFFKKYFQKPISKVLDARKEKIANELKQAEIDREMAAKANEETQGILKAARTEANEILLRAEKKADDRKEAILKEANSQREKTIKSAELEVEKMKKQARKELQSEVTALAVNLAEKMINEKLDSKLGANLLNVLLKR</sequence>
<gene>
    <name type="primary">atpF</name>
</gene>
<comment type="function">
    <text evidence="1">F(1)F(0) ATP synthase produces ATP from ADP in the presence of a proton or sodium gradient. F-type ATPases consist of two structural domains, F(1) containing the extramembraneous catalytic core and F(0) containing the membrane proton channel, linked together by a central stalk and a peripheral stalk. During catalysis, ATP synthesis in the catalytic domain of F(1) is coupled via a rotary mechanism of the central stalk subunits to proton translocation (By similarity).</text>
</comment>
<comment type="function">
    <text evidence="1">Component of the F(0) channel, it forms part of the peripheral stalk, linking F(1) to F(0).</text>
</comment>
<comment type="subunit">
    <text evidence="1">F-type ATPases have 2 components, F(1) - the catalytic core - and F(0) - the membrane proton channel. F(1) has five subunits: alpha(3), beta(3), gamma(1), delta(1), epsilon(1). F(0) has three main subunits: a(1), b(2) and c(10-14). The alpha and beta chains form an alternating ring which encloses part of the gamma chain. F(1) is attached to F(0) by a central stalk formed by the gamma and epsilon chains, while a peripheral stalk is formed by the delta and b chains (By similarity).</text>
</comment>
<comment type="subcellular location">
    <subcellularLocation>
        <location evidence="1">Cell inner membrane</location>
        <topology evidence="1">Single-pass membrane protein</topology>
    </subcellularLocation>
</comment>
<comment type="miscellaneous">
    <text>The ATPase of I.tartaricus is of special interest because it uses sodium ions instead of protons as the physiological coupling ion.</text>
</comment>
<comment type="similarity">
    <text evidence="3">Belongs to the ATPase B chain family.</text>
</comment>
<feature type="chain" id="PRO_0000368530" description="ATP synthase subunit b, sodium ion specific">
    <location>
        <begin position="1"/>
        <end position="163"/>
    </location>
</feature>
<feature type="transmembrane region" description="Helical" evidence="2">
    <location>
        <begin position="9"/>
        <end position="29"/>
    </location>
</feature>
<feature type="sequence conflict" description="In Ref. 1; AA sequence." evidence="3" ref="1">
    <original>W</original>
    <variation>I</variation>
    <location>
        <position position="17"/>
    </location>
</feature>
<feature type="sequence conflict" description="In Ref. 1; AA sequence." evidence="3" ref="1">
    <location>
        <position position="21"/>
    </location>
</feature>
<proteinExistence type="evidence at protein level"/>
<protein>
    <recommendedName>
        <fullName>ATP synthase subunit b, sodium ion specific</fullName>
    </recommendedName>
    <alternativeName>
        <fullName>ATP synthase F(0) sector subunit b</fullName>
    </alternativeName>
    <alternativeName>
        <fullName>ATPase subunit I</fullName>
    </alternativeName>
    <alternativeName>
        <fullName>F-type ATPase subunit b</fullName>
        <shortName>F-ATPase subunit b</shortName>
    </alternativeName>
</protein>
<dbReference type="EMBL" id="AF522463">
    <property type="protein sequence ID" value="AAM94909.1"/>
    <property type="molecule type" value="Genomic_DNA"/>
</dbReference>
<dbReference type="SMR" id="Q8KRV2"/>
<dbReference type="GO" id="GO:0005886">
    <property type="term" value="C:plasma membrane"/>
    <property type="evidence" value="ECO:0007669"/>
    <property type="project" value="UniProtKB-SubCell"/>
</dbReference>
<dbReference type="GO" id="GO:0045259">
    <property type="term" value="C:proton-transporting ATP synthase complex"/>
    <property type="evidence" value="ECO:0007669"/>
    <property type="project" value="UniProtKB-KW"/>
</dbReference>
<dbReference type="GO" id="GO:0046933">
    <property type="term" value="F:proton-transporting ATP synthase activity, rotational mechanism"/>
    <property type="evidence" value="ECO:0007669"/>
    <property type="project" value="UniProtKB-UniRule"/>
</dbReference>
<dbReference type="GO" id="GO:0046961">
    <property type="term" value="F:proton-transporting ATPase activity, rotational mechanism"/>
    <property type="evidence" value="ECO:0007669"/>
    <property type="project" value="TreeGrafter"/>
</dbReference>
<dbReference type="GO" id="GO:0006814">
    <property type="term" value="P:sodium ion transport"/>
    <property type="evidence" value="ECO:0007669"/>
    <property type="project" value="UniProtKB-KW"/>
</dbReference>
<dbReference type="CDD" id="cd06503">
    <property type="entry name" value="ATP-synt_Fo_b"/>
    <property type="match status" value="1"/>
</dbReference>
<dbReference type="Gene3D" id="6.10.250.1580">
    <property type="match status" value="1"/>
</dbReference>
<dbReference type="HAMAP" id="MF_01398">
    <property type="entry name" value="ATP_synth_b_bprime"/>
    <property type="match status" value="1"/>
</dbReference>
<dbReference type="InterPro" id="IPR028987">
    <property type="entry name" value="ATP_synth_B-like_membr_sf"/>
</dbReference>
<dbReference type="InterPro" id="IPR002146">
    <property type="entry name" value="ATP_synth_b/b'su_bac/chlpt"/>
</dbReference>
<dbReference type="InterPro" id="IPR005864">
    <property type="entry name" value="ATP_synth_F0_bsu_bac"/>
</dbReference>
<dbReference type="InterPro" id="IPR050059">
    <property type="entry name" value="ATP_synthase_B_chain"/>
</dbReference>
<dbReference type="NCBIfam" id="TIGR01144">
    <property type="entry name" value="ATP_synt_b"/>
    <property type="match status" value="1"/>
</dbReference>
<dbReference type="PANTHER" id="PTHR33445:SF1">
    <property type="entry name" value="ATP SYNTHASE SUBUNIT B"/>
    <property type="match status" value="1"/>
</dbReference>
<dbReference type="PANTHER" id="PTHR33445">
    <property type="entry name" value="ATP SYNTHASE SUBUNIT B', CHLOROPLASTIC"/>
    <property type="match status" value="1"/>
</dbReference>
<dbReference type="Pfam" id="PF00430">
    <property type="entry name" value="ATP-synt_B"/>
    <property type="match status" value="1"/>
</dbReference>
<dbReference type="SUPFAM" id="SSF81573">
    <property type="entry name" value="F1F0 ATP synthase subunit B, membrane domain"/>
    <property type="match status" value="1"/>
</dbReference>
<evidence type="ECO:0000250" key="1"/>
<evidence type="ECO:0000255" key="2"/>
<evidence type="ECO:0000305" key="3"/>
<accession>Q8KRV2</accession>